<protein>
    <recommendedName>
        <fullName evidence="3">Eukaryotic translation initiation factor 3 subunit A</fullName>
        <shortName evidence="3">eIF3a</shortName>
    </recommendedName>
    <alternativeName>
        <fullName>Centrosomin</fullName>
    </alternativeName>
    <alternativeName>
        <fullName evidence="3">Eukaryotic translation initiation factor 3 subunit 10</fullName>
    </alternativeName>
    <alternativeName>
        <fullName evidence="3">eIF-3-theta</fullName>
    </alternativeName>
    <alternativeName>
        <fullName>eIF3 p167</fullName>
    </alternativeName>
    <alternativeName>
        <fullName>eIF3 p180</fullName>
    </alternativeName>
    <alternativeName>
        <fullName>eIF3 p185</fullName>
    </alternativeName>
    <alternativeName>
        <fullName>p162</fullName>
    </alternativeName>
</protein>
<reference key="1">
    <citation type="submission" date="1994-09" db="EMBL/GenBank/DDBJ databases">
        <title>Molecular cloning and characterization of the 162 kDa component of a multi-protein complex phosphorylated by Src.</title>
        <authorList>
            <person name="Fisher R."/>
            <person name="Fillmore H."/>
            <person name="Reynolds A.B."/>
        </authorList>
    </citation>
    <scope>NUCLEOTIDE SEQUENCE [MRNA]</scope>
    <source>
        <tissue>Lymphoma</tissue>
    </source>
</reference>
<reference key="2">
    <citation type="journal article" date="2009" name="PLoS Biol.">
        <title>Lineage-specific biology revealed by a finished genome assembly of the mouse.</title>
        <authorList>
            <person name="Church D.M."/>
            <person name="Goodstadt L."/>
            <person name="Hillier L.W."/>
            <person name="Zody M.C."/>
            <person name="Goldstein S."/>
            <person name="She X."/>
            <person name="Bult C.J."/>
            <person name="Agarwala R."/>
            <person name="Cherry J.L."/>
            <person name="DiCuccio M."/>
            <person name="Hlavina W."/>
            <person name="Kapustin Y."/>
            <person name="Meric P."/>
            <person name="Maglott D."/>
            <person name="Birtle Z."/>
            <person name="Marques A.C."/>
            <person name="Graves T."/>
            <person name="Zhou S."/>
            <person name="Teague B."/>
            <person name="Potamousis K."/>
            <person name="Churas C."/>
            <person name="Place M."/>
            <person name="Herschleb J."/>
            <person name="Runnheim R."/>
            <person name="Forrest D."/>
            <person name="Amos-Landgraf J."/>
            <person name="Schwartz D.C."/>
            <person name="Cheng Z."/>
            <person name="Lindblad-Toh K."/>
            <person name="Eichler E.E."/>
            <person name="Ponting C.P."/>
        </authorList>
    </citation>
    <scope>NUCLEOTIDE SEQUENCE [LARGE SCALE GENOMIC DNA]</scope>
    <source>
        <strain>C57BL/6J</strain>
    </source>
</reference>
<reference key="3">
    <citation type="journal article" date="1997" name="J. Cell Sci.">
        <title>The centrosomal protein centrosomin A and the nuclear protein centrosomin B derive from one gene by post-transcriptional processes involving RNA editing.</title>
        <authorList>
            <person name="Petzelt C."/>
            <person name="Joswig G."/>
            <person name="Mincheva A."/>
            <person name="Lichter P."/>
            <person name="Stammer H."/>
            <person name="Werner D."/>
        </authorList>
    </citation>
    <scope>NUCLEOTIDE SEQUENCE [MRNA] OF 401-1142 (CENTROSOMIN B)</scope>
    <scope>SUBCELLULAR LOCATION</scope>
    <scope>RNA EDITING</scope>
    <source>
        <tissue>Ehrlich ascites tumor cell</tissue>
    </source>
</reference>
<reference key="4">
    <citation type="journal article" date="1991" name="J. Cell Sci.">
        <title>Murine cDNAs coding for the centrosomal antigen centrosomin A.</title>
        <authorList>
            <person name="Joswig G."/>
            <person name="Petzelt C."/>
            <person name="Werner D."/>
        </authorList>
    </citation>
    <scope>NUCLEOTIDE SEQUENCE [MRNA] OF 514-790 (CENTROSOMIN A)</scope>
    <source>
        <tissue>Ehrlich ascites tumor cell</tissue>
    </source>
</reference>
<reference key="5">
    <citation type="submission" date="1996-12" db="EMBL/GenBank/DDBJ databases">
        <authorList>
            <person name="Joswig G."/>
            <person name="Petzelt C."/>
            <person name="Werner D."/>
        </authorList>
    </citation>
    <scope>SEQUENCE REVISION</scope>
</reference>
<reference key="6">
    <citation type="journal article" date="2006" name="EMBO J.">
        <title>mTOR-dependent stimulation of the association of eIF4G and eIF3 by insulin.</title>
        <authorList>
            <person name="Harris T.E."/>
            <person name="Chi A."/>
            <person name="Shabanowitz J."/>
            <person name="Hunt D.F."/>
            <person name="Rhoads R.E."/>
            <person name="Lawrence J.C. Jr."/>
        </authorList>
    </citation>
    <scope>INTERACTION WITH EIF3B AND EIF4G1</scope>
</reference>
<reference key="7">
    <citation type="journal article" date="2007" name="EMBO J.">
        <title>Reconstitution reveals the functional core of mammalian eIF3.</title>
        <authorList>
            <person name="Masutani M."/>
            <person name="Sonenberg N."/>
            <person name="Yokoyama S."/>
            <person name="Imataka H."/>
        </authorList>
    </citation>
    <scope>FUNCTION</scope>
    <scope>CHARACTERIZATION OF THE EIF-3 COMPLEX</scope>
    <scope>IDENTIFICATION IN THE EIF-3 COMPLEX</scope>
    <scope>IDENTIFICATION BY MASS SPECTROMETRY</scope>
</reference>
<reference key="8">
    <citation type="journal article" date="2009" name="J. Biol. Chem.">
        <title>MILI, a PIWI-interacting RNA-binding protein, is required for germ Line stem cell self-renewal and appears to positively regulate translation.</title>
        <authorList>
            <person name="Unhavaithaya Y."/>
            <person name="Hao Y."/>
            <person name="Beyret E."/>
            <person name="Yin H."/>
            <person name="Kuramochi-Miyagawa S."/>
            <person name="Nakano T."/>
            <person name="Lin H."/>
        </authorList>
    </citation>
    <scope>INTERACTION WITH PIWIL2</scope>
</reference>
<reference key="9">
    <citation type="journal article" date="2010" name="Cell">
        <title>A tissue-specific atlas of mouse protein phosphorylation and expression.</title>
        <authorList>
            <person name="Huttlin E.L."/>
            <person name="Jedrychowski M.P."/>
            <person name="Elias J.E."/>
            <person name="Goswami T."/>
            <person name="Rad R."/>
            <person name="Beausoleil S.A."/>
            <person name="Villen J."/>
            <person name="Haas W."/>
            <person name="Sowa M.E."/>
            <person name="Gygi S.P."/>
        </authorList>
    </citation>
    <scope>PHOSPHORYLATION [LARGE SCALE ANALYSIS] AT SER-584</scope>
    <scope>IDENTIFICATION BY MASS SPECTROMETRY [LARGE SCALE ANALYSIS]</scope>
    <source>
        <tissue>Brain</tissue>
        <tissue>Brown adipose tissue</tissue>
        <tissue>Heart</tissue>
        <tissue>Kidney</tissue>
        <tissue>Liver</tissue>
        <tissue>Lung</tissue>
        <tissue>Pancreas</tissue>
        <tissue>Spleen</tissue>
        <tissue>Testis</tissue>
    </source>
</reference>
<accession>P23116</accession>
<accession>E9QQ50</accession>
<accession>Q60697</accession>
<accession>Q62162</accession>
<comment type="function">
    <text evidence="3 7">RNA-binding component of the eukaryotic translation initiation factor 3 (eIF-3) complex, which is required for several steps in the initiation of protein synthesis. The eIF-3 complex associates with the 40S ribosome and facilitates the recruitment of eIF-1, eIF-1A, eIF-2:GTP:methionyl-tRNAi and eIF-5 to form the 43S pre-initiation complex (43S PIC). The eIF-3 complex stimulates mRNA recruitment to the 43S PIC and scanning of the mRNA for AUG recognition. The eIF-3 complex is also required for disassembly and recycling of post-termination ribosomal complexes and subsequently prevents premature joining of the 40S and 60S ribosomal subunits prior to initiation. The eIF-3 complex specifically targets and initiates translation of a subset of mRNAs involved in cell proliferation, including cell cycling, differentiation and apoptosis, and uses different modes of RNA stem-loop binding to exert either translational activation or repression.</text>
</comment>
<comment type="subunit">
    <text evidence="1 6 7 8">Interacts with KRT7 (By similarity). Component of the eukaryotic translation initiation factor 3 (eIF-3) complex, which is composed of 13 subunits: EIF3A, EIF3B, EIF3C, EIF3D, EIF3E, EIF3F, EIF3G, EIF3H, EIF3I, EIF3J, EIF3K, EIF3L and EIF3M. The eIF-3 complex appears to include 3 stable modules: module A is composed of EIF3A, EIF3B, EIF3G and EIF3I; module B is composed of EIF3F, EIF3H, and EIF3M; and module C is composed of EIF3C, EIF3D, EIF3E, EIF3L and EIF3K. EIF3C of module C binds EIF3B of module A and EIF3H of module B, thereby linking the three modules. EIF3J is a labile subunit that binds to the eIF-3 complex via EIF3B. The eIF-3 complex may interact with RPS6KB1 under conditions of nutrient depletion. Mitogenic stimulation may lead to binding and activation of a complex composed of MTOR and RPTOR, leading to phosphorylation and release of RPS6KB1 and binding of EIF4B to eIF-3. Interacts with EIF4G1 and PIWIL2.</text>
</comment>
<comment type="subcellular location">
    <subcellularLocation>
        <location evidence="3">Cytoplasm</location>
    </subcellularLocation>
    <subcellularLocation>
        <location evidence="9">Cytoplasm</location>
        <location evidence="9">Cytoskeleton</location>
        <location evidence="9">Microtubule organizing center</location>
        <location evidence="9">Centrosome</location>
    </subcellularLocation>
    <subcellularLocation>
        <location evidence="9">Nucleus</location>
    </subcellularLocation>
    <text>Centrosomin-A is found in the centrosome. Centrosomin-B is found in the nucleus.</text>
</comment>
<comment type="PTM">
    <text evidence="3">Phosphorylated. Phosphorylation is enhanced upon serum stimulation.</text>
</comment>
<comment type="RNA editing" locationType="Not_applicable">
    <text evidence="9">Some positions are modified by RNA editing via nucleotide deletion, up to position 787. The unedited version gives rise to centrosomin-B (shown here). The fully edited version gives rise to centrosomin-A, in which the C-terminal sequence is replaced up to position 787 by Ser-Ile-Val-Ala-STOP. A combination of alternative splicing and RNA editing resulting in this template G deletion could also explain the generation of centrosomin-A mRNA.</text>
</comment>
<comment type="similarity">
    <text evidence="3">Belongs to the eIF-3 subunit A family.</text>
</comment>
<comment type="sequence caution" evidence="10">
    <conflict type="frameshift">
        <sequence resource="EMBL-CDS" id="CAA35246"/>
    </conflict>
</comment>
<comment type="sequence caution" evidence="10">
    <conflict type="frameshift">
        <sequence resource="EMBL-CDS" id="CAA59144"/>
    </conflict>
</comment>
<feature type="chain" id="PRO_0000123538" description="Eukaryotic translation initiation factor 3 subunit A">
    <location>
        <begin position="1"/>
        <end position="1344"/>
    </location>
</feature>
<feature type="domain" description="PCI" evidence="4">
    <location>
        <begin position="315"/>
        <end position="498"/>
    </location>
</feature>
<feature type="repeat" description="1; truncated">
    <location>
        <begin position="924"/>
        <end position="931"/>
    </location>
</feature>
<feature type="repeat" description="2">
    <location>
        <begin position="932"/>
        <end position="941"/>
    </location>
</feature>
<feature type="repeat" description="3; approximate">
    <location>
        <begin position="942"/>
        <end position="951"/>
    </location>
</feature>
<feature type="repeat" description="4">
    <location>
        <begin position="953"/>
        <end position="962"/>
    </location>
</feature>
<feature type="repeat" description="5">
    <location>
        <begin position="963"/>
        <end position="972"/>
    </location>
</feature>
<feature type="repeat" description="6">
    <location>
        <begin position="973"/>
        <end position="982"/>
    </location>
</feature>
<feature type="repeat" description="7">
    <location>
        <begin position="983"/>
        <end position="992"/>
    </location>
</feature>
<feature type="repeat" description="8">
    <location>
        <begin position="993"/>
        <end position="1002"/>
    </location>
</feature>
<feature type="repeat" description="9">
    <location>
        <begin position="1003"/>
        <end position="1012"/>
    </location>
</feature>
<feature type="repeat" description="10">
    <location>
        <begin position="1013"/>
        <end position="1022"/>
    </location>
</feature>
<feature type="repeat" description="11">
    <location>
        <begin position="1023"/>
        <end position="1032"/>
    </location>
</feature>
<feature type="repeat" description="12">
    <location>
        <begin position="1033"/>
        <end position="1042"/>
    </location>
</feature>
<feature type="repeat" description="13">
    <location>
        <begin position="1043"/>
        <end position="1052"/>
    </location>
</feature>
<feature type="repeat" description="14">
    <location>
        <begin position="1054"/>
        <end position="1063"/>
    </location>
</feature>
<feature type="repeat" description="15">
    <location>
        <begin position="1064"/>
        <end position="1073"/>
    </location>
</feature>
<feature type="repeat" description="16">
    <location>
        <begin position="1074"/>
        <end position="1083"/>
    </location>
</feature>
<feature type="repeat" description="17">
    <location>
        <begin position="1084"/>
        <end position="1093"/>
    </location>
</feature>
<feature type="repeat" description="18">
    <location>
        <begin position="1094"/>
        <end position="1103"/>
    </location>
</feature>
<feature type="repeat" description="19">
    <location>
        <begin position="1104"/>
        <end position="1113"/>
    </location>
</feature>
<feature type="repeat" description="20">
    <location>
        <begin position="1114"/>
        <end position="1123"/>
    </location>
</feature>
<feature type="repeat" description="21; approximate">
    <location>
        <begin position="1124"/>
        <end position="1133"/>
    </location>
</feature>
<feature type="region of interest" description="Interaction with EIF3B" evidence="3">
    <location>
        <begin position="664"/>
        <end position="835"/>
    </location>
</feature>
<feature type="region of interest" description="Disordered" evidence="5">
    <location>
        <begin position="807"/>
        <end position="844"/>
    </location>
</feature>
<feature type="region of interest" description="Disordered" evidence="5">
    <location>
        <begin position="866"/>
        <end position="1240"/>
    </location>
</feature>
<feature type="region of interest" description="21 X 10 AA approximate tandem repeats of [DA]-[DE]-[ED]-R-[PLIGFSV]-[RPS]-[RW]-[RL]-[GNIHT]-[DGLPTAM]">
    <location>
        <begin position="924"/>
        <end position="1133"/>
    </location>
</feature>
<feature type="region of interest" description="Disordered" evidence="5">
    <location>
        <begin position="1252"/>
        <end position="1344"/>
    </location>
</feature>
<feature type="coiled-coil region" evidence="3">
    <location>
        <begin position="82"/>
        <end position="120"/>
    </location>
</feature>
<feature type="compositionally biased region" description="Basic and acidic residues" evidence="5">
    <location>
        <begin position="866"/>
        <end position="1126"/>
    </location>
</feature>
<feature type="compositionally biased region" description="Basic and acidic residues" evidence="5">
    <location>
        <begin position="1138"/>
        <end position="1240"/>
    </location>
</feature>
<feature type="compositionally biased region" description="Basic and acidic residues" evidence="5">
    <location>
        <begin position="1252"/>
        <end position="1292"/>
    </location>
</feature>
<feature type="compositionally biased region" description="Basic and acidic residues" evidence="5">
    <location>
        <begin position="1300"/>
        <end position="1333"/>
    </location>
</feature>
<feature type="modified residue" description="N6-acetyllysine" evidence="2">
    <location>
        <position position="68"/>
    </location>
</feature>
<feature type="modified residue" description="Phosphoserine" evidence="2 3">
    <location>
        <position position="492"/>
    </location>
</feature>
<feature type="modified residue" description="Phosphoserine" evidence="11">
    <location>
        <position position="584"/>
    </location>
</feature>
<feature type="modified residue" description="Phosphoserine" evidence="2">
    <location>
        <position position="895"/>
    </location>
</feature>
<feature type="modified residue" description="Phosphoserine" evidence="2">
    <location>
        <position position="949"/>
    </location>
</feature>
<feature type="modified residue" description="Phosphoserine" evidence="2">
    <location>
        <position position="1028"/>
    </location>
</feature>
<feature type="modified residue" description="Phosphoserine" evidence="2">
    <location>
        <position position="1149"/>
    </location>
</feature>
<feature type="modified residue" description="Phosphoserine" evidence="2 3">
    <location>
        <position position="1159"/>
    </location>
</feature>
<feature type="modified residue" description="Phosphoserine" evidence="2">
    <location>
        <position position="1223"/>
    </location>
</feature>
<feature type="modified residue" description="Phosphoserine" evidence="2 3">
    <location>
        <position position="1300"/>
    </location>
</feature>
<feature type="modified residue" description="Phosphoserine" evidence="2 3">
    <location>
        <position position="1326"/>
    </location>
</feature>
<feature type="sequence conflict" description="In Ref. 1; AAA90910 and 3; CAA35246/CAA59144." evidence="10" ref="1 3">
    <original>L</original>
    <variation>I</variation>
    <location>
        <position position="534"/>
    </location>
</feature>
<feature type="sequence conflict" description="In Ref. 3; CAA35246/CAA59144." evidence="10" ref="3">
    <original>EL</original>
    <variation>DY</variation>
    <location>
        <begin position="683"/>
        <end position="684"/>
    </location>
</feature>
<feature type="sequence conflict" description="In Ref. 3; CAA35246/CAA59144." evidence="10" ref="3">
    <original>Q</original>
    <variation>H</variation>
    <location>
        <position position="717"/>
    </location>
</feature>
<feature type="sequence conflict" description="In Ref. 3; CAA35246/CAA59144." evidence="10" ref="3">
    <original>A</original>
    <variation>V</variation>
    <location>
        <position position="766"/>
    </location>
</feature>
<feature type="sequence conflict" description="In Ref. 1; AAA90910." evidence="10" ref="1">
    <original>D</original>
    <variation>E</variation>
    <location>
        <position position="793"/>
    </location>
</feature>
<feature type="sequence conflict" description="In Ref. 3; CAA59144." evidence="10" ref="3">
    <original>G</original>
    <variation>A</variation>
    <location>
        <position position="1007"/>
    </location>
</feature>
<feature type="sequence conflict" description="In Ref. 3; CAA59144." evidence="10" ref="3">
    <original>E</original>
    <variation>D</variation>
    <location>
        <position position="1056"/>
    </location>
</feature>
<keyword id="KW-0007">Acetylation</keyword>
<keyword id="KW-0175">Coiled coil</keyword>
<keyword id="KW-0963">Cytoplasm</keyword>
<keyword id="KW-0206">Cytoskeleton</keyword>
<keyword id="KW-0396">Initiation factor</keyword>
<keyword id="KW-0539">Nucleus</keyword>
<keyword id="KW-0597">Phosphoprotein</keyword>
<keyword id="KW-0648">Protein biosynthesis</keyword>
<keyword id="KW-1185">Reference proteome</keyword>
<keyword id="KW-0677">Repeat</keyword>
<keyword id="KW-0691">RNA editing</keyword>
<keyword id="KW-0694">RNA-binding</keyword>
<organism>
    <name type="scientific">Mus musculus</name>
    <name type="common">Mouse</name>
    <dbReference type="NCBI Taxonomy" id="10090"/>
    <lineage>
        <taxon>Eukaryota</taxon>
        <taxon>Metazoa</taxon>
        <taxon>Chordata</taxon>
        <taxon>Craniata</taxon>
        <taxon>Vertebrata</taxon>
        <taxon>Euteleostomi</taxon>
        <taxon>Mammalia</taxon>
        <taxon>Eutheria</taxon>
        <taxon>Euarchontoglires</taxon>
        <taxon>Glires</taxon>
        <taxon>Rodentia</taxon>
        <taxon>Myomorpha</taxon>
        <taxon>Muroidea</taxon>
        <taxon>Muridae</taxon>
        <taxon>Murinae</taxon>
        <taxon>Mus</taxon>
        <taxon>Mus</taxon>
    </lineage>
</organism>
<evidence type="ECO:0000250" key="1"/>
<evidence type="ECO:0000250" key="2">
    <source>
        <dbReference type="UniProtKB" id="Q14152"/>
    </source>
</evidence>
<evidence type="ECO:0000255" key="3">
    <source>
        <dbReference type="HAMAP-Rule" id="MF_03000"/>
    </source>
</evidence>
<evidence type="ECO:0000255" key="4">
    <source>
        <dbReference type="PROSITE-ProRule" id="PRU01185"/>
    </source>
</evidence>
<evidence type="ECO:0000256" key="5">
    <source>
        <dbReference type="SAM" id="MobiDB-lite"/>
    </source>
</evidence>
<evidence type="ECO:0000269" key="6">
    <source>
    </source>
</evidence>
<evidence type="ECO:0000269" key="7">
    <source>
    </source>
</evidence>
<evidence type="ECO:0000269" key="8">
    <source>
    </source>
</evidence>
<evidence type="ECO:0000269" key="9">
    <source>
    </source>
</evidence>
<evidence type="ECO:0000305" key="10"/>
<evidence type="ECO:0007744" key="11">
    <source>
    </source>
</evidence>
<sequence>MPAYFQRPENALKRANEFLEVGKKQPALDVLYDVMKSKKHRTWQKIHEPIMLKYLELCVDLRKSHLAKEGLYQYKNICQQVNIKSLEDVVRAYLKLAEEKTEAAKEESQQMVLDIEDLDNIQTPESVLLSAVSGEDTQDRTDRLLLTPWVKFLWESYRQCLDLLRNNSRVERLYHDIAQQAFKFCLQYTRKAEFRKLCDNLRMHLSQIQRHHNQSTAINLNNPESQSMHLETRLVQLDSAISMELWQEAFKAVEDIHGLFSLSKKPPKPQLMANYYNKVSTVFWKSGNALFHASTLHRLYHLSREMRKNLTQEEMQRMSTRVLLATLSIPITPERTDIARLLDMDGIIVEKQRRLATLLGLQAPPTRIGLINDMVRFSVLQYVVPEVKDLYNWLEVEFNPLKLCERVTKVLNWVREQPEKEPELQQYVPQLQNNTILRLLQQVAQIYQSIEFSRLTSLVPFVDAFQLERAIVDAARHCDLQVRIDHTSRTLSFGSDLNYATREDAPVGPHLQSMPSEQIRNQLTAMSSVLAKALEVIRPAHILQEKEEQHQLAVNAYLKNSRKEHQRILARRQTIEERKERLESLNIQREKEELEQREAELQKVRKAEEERLRQEAKEREKERILQEHEQIKKKTVRERLEQIKKTELGAKAFKDIDIEDLEELDPDFIMAKQVEQLEKEKKELQERLKNQEKKIDYFERAKRLEEIPLIKSAYEEQRVKDMDLWEQQEEERITTMQLEREKALEHKNRMSRMLEDRDLFVMRLKAARQSVYEEKLKQFEERLAEERHSRLEDRKRQRKEERKITYYREKEEEEQRRAEEQMLKEREERERAERAKREEELREYQERVKKLEEVERKKRQRELEIEERERRREEERRLGDDPLSRKDSRWGDRDSEGTWRKGPEADSEWRRGPPEKEWRRETRDDERPHRRDEDRLRRLGGDDEERESSLRPDDDRIPRRGLDDDRGPRRGPDEDRFSRRGTDDDRPSWRNADDDRPPRRIGDDDRGSWRHTDDDRPPRRGLDDERGSWRTADEDRGPRRGMDDDRGPRRGGADDERSSWRNADDDRGPRRGMDDDRGPRRGLDDDRGPWRNAAEDRISRRGADDDRGPWRNMDDDRVPRRGDDARPGPWRPFVKPGGWREKEKAREESWGPPRESRPSEEREWDRDKEKDRDNQDREENDKDLERDRDRERDGDREDRFRRPRDEGGWRRGPAEESSSWRDSSRRDDRDREDRRRDRDDRRDLRDLRDRRDLRDDRDRRGPPLRSEREEASSWRRTDDRKDDRTEERDPPRRVPPPALSRDREREREREGEKEKASWRAEKDRESLRRTKNETDEDGWTTVRR</sequence>
<name>EIF3A_MOUSE</name>
<dbReference type="EMBL" id="U14172">
    <property type="protein sequence ID" value="AAA90910.1"/>
    <property type="molecule type" value="mRNA"/>
</dbReference>
<dbReference type="EMBL" id="AC163019">
    <property type="status" value="NOT_ANNOTATED_CDS"/>
    <property type="molecule type" value="Genomic_DNA"/>
</dbReference>
<dbReference type="EMBL" id="X84651">
    <property type="protein sequence ID" value="CAA59144.1"/>
    <property type="status" value="ALT_FRAME"/>
    <property type="molecule type" value="mRNA"/>
</dbReference>
<dbReference type="EMBL" id="X17373">
    <property type="protein sequence ID" value="CAA35246.1"/>
    <property type="status" value="ALT_FRAME"/>
    <property type="molecule type" value="mRNA"/>
</dbReference>
<dbReference type="CCDS" id="CCDS38035.1"/>
<dbReference type="PIR" id="S13800">
    <property type="entry name" value="S13800"/>
</dbReference>
<dbReference type="PIR" id="T42637">
    <property type="entry name" value="T42637"/>
</dbReference>
<dbReference type="RefSeq" id="NP_034253.3">
    <property type="nucleotide sequence ID" value="NM_010123.3"/>
</dbReference>
<dbReference type="SMR" id="P23116"/>
<dbReference type="BioGRID" id="199415">
    <property type="interactions" value="173"/>
</dbReference>
<dbReference type="FunCoup" id="P23116">
    <property type="interactions" value="4731"/>
</dbReference>
<dbReference type="IntAct" id="P23116">
    <property type="interactions" value="139"/>
</dbReference>
<dbReference type="MINT" id="P23116"/>
<dbReference type="STRING" id="10090.ENSMUSP00000025955"/>
<dbReference type="GlyGen" id="P23116">
    <property type="glycosylation" value="6 sites, 2 N-linked glycans (3 sites), 1 O-linked glycan (3 sites)"/>
</dbReference>
<dbReference type="iPTMnet" id="P23116"/>
<dbReference type="MetOSite" id="P23116"/>
<dbReference type="PhosphoSitePlus" id="P23116"/>
<dbReference type="SwissPalm" id="P23116"/>
<dbReference type="jPOST" id="P23116"/>
<dbReference type="PaxDb" id="10090-ENSMUSP00000025955"/>
<dbReference type="PeptideAtlas" id="P23116"/>
<dbReference type="ProteomicsDB" id="277774"/>
<dbReference type="Pumba" id="P23116"/>
<dbReference type="Antibodypedia" id="32084">
    <property type="antibodies" value="296 antibodies from 34 providers"/>
</dbReference>
<dbReference type="DNASU" id="13669"/>
<dbReference type="Ensembl" id="ENSMUST00000025955.8">
    <property type="protein sequence ID" value="ENSMUSP00000025955.7"/>
    <property type="gene ID" value="ENSMUSG00000024991.9"/>
</dbReference>
<dbReference type="GeneID" id="13669"/>
<dbReference type="KEGG" id="mmu:13669"/>
<dbReference type="UCSC" id="uc008ibx.1">
    <property type="organism name" value="mouse"/>
</dbReference>
<dbReference type="AGR" id="MGI:95301"/>
<dbReference type="CTD" id="8661"/>
<dbReference type="MGI" id="MGI:95301">
    <property type="gene designation" value="Eif3a"/>
</dbReference>
<dbReference type="VEuPathDB" id="HostDB:ENSMUSG00000024991"/>
<dbReference type="eggNOG" id="KOG2072">
    <property type="taxonomic scope" value="Eukaryota"/>
</dbReference>
<dbReference type="GeneTree" id="ENSGT00730000111063"/>
<dbReference type="HOGENOM" id="CLU_002096_1_1_1"/>
<dbReference type="InParanoid" id="P23116"/>
<dbReference type="OMA" id="EHITNKR"/>
<dbReference type="OrthoDB" id="18884at2759"/>
<dbReference type="PhylomeDB" id="P23116"/>
<dbReference type="TreeFam" id="TF101522"/>
<dbReference type="Reactome" id="R-MMU-156827">
    <property type="pathway name" value="L13a-mediated translational silencing of Ceruloplasmin expression"/>
</dbReference>
<dbReference type="Reactome" id="R-MMU-72649">
    <property type="pathway name" value="Translation initiation complex formation"/>
</dbReference>
<dbReference type="Reactome" id="R-MMU-72689">
    <property type="pathway name" value="Formation of a pool of free 40S subunits"/>
</dbReference>
<dbReference type="Reactome" id="R-MMU-72695">
    <property type="pathway name" value="Formation of the ternary complex, and subsequently, the 43S complex"/>
</dbReference>
<dbReference type="Reactome" id="R-MMU-72702">
    <property type="pathway name" value="Ribosomal scanning and start codon recognition"/>
</dbReference>
<dbReference type="Reactome" id="R-MMU-72706">
    <property type="pathway name" value="GTP hydrolysis and joining of the 60S ribosomal subunit"/>
</dbReference>
<dbReference type="BioGRID-ORCS" id="13669">
    <property type="hits" value="18 hits in 81 CRISPR screens"/>
</dbReference>
<dbReference type="CD-CODE" id="01CA17F3">
    <property type="entry name" value="Centrosome"/>
</dbReference>
<dbReference type="CD-CODE" id="D12E4DB9">
    <property type="entry name" value="Stress granule"/>
</dbReference>
<dbReference type="ChiTaRS" id="Eif3a">
    <property type="organism name" value="mouse"/>
</dbReference>
<dbReference type="PRO" id="PR:P23116"/>
<dbReference type="Proteomes" id="UP000000589">
    <property type="component" value="Chromosome 19"/>
</dbReference>
<dbReference type="RNAct" id="P23116">
    <property type="molecule type" value="protein"/>
</dbReference>
<dbReference type="Bgee" id="ENSMUSG00000024991">
    <property type="expression patterns" value="Expressed in lacrimal gland and 259 other cell types or tissues"/>
</dbReference>
<dbReference type="ExpressionAtlas" id="P23116">
    <property type="expression patterns" value="baseline and differential"/>
</dbReference>
<dbReference type="GO" id="GO:0005813">
    <property type="term" value="C:centrosome"/>
    <property type="evidence" value="ECO:0007669"/>
    <property type="project" value="UniProtKB-SubCell"/>
</dbReference>
<dbReference type="GO" id="GO:0005829">
    <property type="term" value="C:cytosol"/>
    <property type="evidence" value="ECO:0007669"/>
    <property type="project" value="Ensembl"/>
</dbReference>
<dbReference type="GO" id="GO:0016282">
    <property type="term" value="C:eukaryotic 43S preinitiation complex"/>
    <property type="evidence" value="ECO:0007669"/>
    <property type="project" value="UniProtKB-UniRule"/>
</dbReference>
<dbReference type="GO" id="GO:0033290">
    <property type="term" value="C:eukaryotic 48S preinitiation complex"/>
    <property type="evidence" value="ECO:0007669"/>
    <property type="project" value="UniProtKB-UniRule"/>
</dbReference>
<dbReference type="GO" id="GO:0005852">
    <property type="term" value="C:eukaryotic translation initiation factor 3 complex"/>
    <property type="evidence" value="ECO:0000314"/>
    <property type="project" value="UniProtKB"/>
</dbReference>
<dbReference type="GO" id="GO:0071541">
    <property type="term" value="C:eukaryotic translation initiation factor 3 complex, eIF3m"/>
    <property type="evidence" value="ECO:0000314"/>
    <property type="project" value="MGI"/>
</dbReference>
<dbReference type="GO" id="GO:0005874">
    <property type="term" value="C:microtubule"/>
    <property type="evidence" value="ECO:0007669"/>
    <property type="project" value="Ensembl"/>
</dbReference>
<dbReference type="GO" id="GO:0005730">
    <property type="term" value="C:nucleolus"/>
    <property type="evidence" value="ECO:0007669"/>
    <property type="project" value="Ensembl"/>
</dbReference>
<dbReference type="GO" id="GO:0005654">
    <property type="term" value="C:nucleoplasm"/>
    <property type="evidence" value="ECO:0007669"/>
    <property type="project" value="Ensembl"/>
</dbReference>
<dbReference type="GO" id="GO:0014069">
    <property type="term" value="C:postsynaptic density"/>
    <property type="evidence" value="ECO:0000314"/>
    <property type="project" value="SynGO"/>
</dbReference>
<dbReference type="GO" id="GO:0030971">
    <property type="term" value="F:receptor tyrosine kinase binding"/>
    <property type="evidence" value="ECO:0007669"/>
    <property type="project" value="Ensembl"/>
</dbReference>
<dbReference type="GO" id="GO:0003723">
    <property type="term" value="F:RNA binding"/>
    <property type="evidence" value="ECO:0007669"/>
    <property type="project" value="UniProtKB-UniRule"/>
</dbReference>
<dbReference type="GO" id="GO:0003743">
    <property type="term" value="F:translation initiation factor activity"/>
    <property type="evidence" value="ECO:0007669"/>
    <property type="project" value="UniProtKB-UniRule"/>
</dbReference>
<dbReference type="GO" id="GO:0001732">
    <property type="term" value="P:formation of cytoplasmic translation initiation complex"/>
    <property type="evidence" value="ECO:0000314"/>
    <property type="project" value="UniProtKB"/>
</dbReference>
<dbReference type="GO" id="GO:0075522">
    <property type="term" value="P:IRES-dependent viral translational initiation"/>
    <property type="evidence" value="ECO:0007669"/>
    <property type="project" value="Ensembl"/>
</dbReference>
<dbReference type="GO" id="GO:0070373">
    <property type="term" value="P:negative regulation of ERK1 and ERK2 cascade"/>
    <property type="evidence" value="ECO:0007669"/>
    <property type="project" value="Ensembl"/>
</dbReference>
<dbReference type="GO" id="GO:0075525">
    <property type="term" value="P:viral translational termination-reinitiation"/>
    <property type="evidence" value="ECO:0007669"/>
    <property type="project" value="Ensembl"/>
</dbReference>
<dbReference type="FunFam" id="1.25.40.860:FF:000001">
    <property type="entry name" value="Eukaryotic translation initiation factor 3 subunit A"/>
    <property type="match status" value="1"/>
</dbReference>
<dbReference type="FunFam" id="1.25.40.860:FF:000002">
    <property type="entry name" value="Eukaryotic translation initiation factor 3 subunit A"/>
    <property type="match status" value="1"/>
</dbReference>
<dbReference type="FunFam" id="4.10.860.10:FF:000001">
    <property type="entry name" value="Eukaryotic translation initiation factor 3 subunit A"/>
    <property type="match status" value="1"/>
</dbReference>
<dbReference type="Gene3D" id="1.25.40.860">
    <property type="match status" value="2"/>
</dbReference>
<dbReference type="Gene3D" id="4.10.860.10">
    <property type="entry name" value="UVR domain"/>
    <property type="match status" value="1"/>
</dbReference>
<dbReference type="HAMAP" id="MF_03000">
    <property type="entry name" value="eIF3a"/>
    <property type="match status" value="1"/>
</dbReference>
<dbReference type="InterPro" id="IPR027512">
    <property type="entry name" value="EIF3A"/>
</dbReference>
<dbReference type="InterPro" id="IPR054711">
    <property type="entry name" value="eIF3a_PCI_TPR-like"/>
</dbReference>
<dbReference type="InterPro" id="IPR000717">
    <property type="entry name" value="PCI_dom"/>
</dbReference>
<dbReference type="PANTHER" id="PTHR14005:SF0">
    <property type="entry name" value="EUKARYOTIC TRANSLATION INITIATION FACTOR 3 SUBUNIT A"/>
    <property type="match status" value="1"/>
</dbReference>
<dbReference type="PANTHER" id="PTHR14005">
    <property type="entry name" value="EUKARYOTIC TRANSLATION INITIATION FACTOR 3, THETA SUBUNIT"/>
    <property type="match status" value="1"/>
</dbReference>
<dbReference type="Pfam" id="PF22591">
    <property type="entry name" value="eIF3a_PCI_TPR-like"/>
    <property type="match status" value="1"/>
</dbReference>
<dbReference type="Pfam" id="PF01399">
    <property type="entry name" value="PCI"/>
    <property type="match status" value="1"/>
</dbReference>
<dbReference type="SMART" id="SM00088">
    <property type="entry name" value="PINT"/>
    <property type="match status" value="1"/>
</dbReference>
<dbReference type="PROSITE" id="PS50250">
    <property type="entry name" value="PCI"/>
    <property type="match status" value="1"/>
</dbReference>
<proteinExistence type="evidence at protein level"/>
<gene>
    <name type="primary">Eif3a</name>
    <name type="synonym">Csma</name>
    <name type="synonym">Eif3</name>
    <name type="synonym">Eif3s10</name>
</gene>